<feature type="chain" id="PRO_0000191970" description="UDP-3-O-acyl-N-acetylglucosamine deacetylase">
    <location>
        <begin position="1"/>
        <end position="304"/>
    </location>
</feature>
<feature type="active site" description="Proton donor" evidence="1">
    <location>
        <position position="264"/>
    </location>
</feature>
<feature type="binding site" evidence="1">
    <location>
        <position position="78"/>
    </location>
    <ligand>
        <name>Zn(2+)</name>
        <dbReference type="ChEBI" id="CHEBI:29105"/>
    </ligand>
</feature>
<feature type="binding site" evidence="1">
    <location>
        <position position="237"/>
    </location>
    <ligand>
        <name>Zn(2+)</name>
        <dbReference type="ChEBI" id="CHEBI:29105"/>
    </ligand>
</feature>
<feature type="binding site" evidence="1">
    <location>
        <position position="241"/>
    </location>
    <ligand>
        <name>Zn(2+)</name>
        <dbReference type="ChEBI" id="CHEBI:29105"/>
    </ligand>
</feature>
<evidence type="ECO:0000255" key="1">
    <source>
        <dbReference type="HAMAP-Rule" id="MF_00388"/>
    </source>
</evidence>
<sequence length="304" mass="33570">MSQQRTLNNTIRATGVGLHSGNKIHITLRPAPVNHGIVFRRVDLDPVVEIPASGDLVTEVILCTGLTRNGAKVQTVEHLMSAFAGLGIDNAIVDLSSAELPIMDGSSAPFVFLLQSAGILEQNAAKRFIRIKRSVEVRQGDKVAKFSPYDGYKLGFTIEFDHPMIPHKQSYYEMEFSTAAYIKEISLARTFGFMHDLEDMRERNLGLGGSMDNAILLDDFRVLNEDGLRYGNEFVRHKILDAIGDLYLIGGPILGAYEAFKSGHALNNKLVRAVLADETSWEWISFPSPAAEQPPVVYTHPACI</sequence>
<organism>
    <name type="scientific">Xylella fastidiosa (strain Temecula1 / ATCC 700964)</name>
    <dbReference type="NCBI Taxonomy" id="183190"/>
    <lineage>
        <taxon>Bacteria</taxon>
        <taxon>Pseudomonadati</taxon>
        <taxon>Pseudomonadota</taxon>
        <taxon>Gammaproteobacteria</taxon>
        <taxon>Lysobacterales</taxon>
        <taxon>Lysobacteraceae</taxon>
        <taxon>Xylella</taxon>
    </lineage>
</organism>
<protein>
    <recommendedName>
        <fullName evidence="1">UDP-3-O-acyl-N-acetylglucosamine deacetylase</fullName>
        <shortName evidence="1">UDP-3-O-acyl-GlcNAc deacetylase</shortName>
        <ecNumber evidence="1">3.5.1.108</ecNumber>
    </recommendedName>
    <alternativeName>
        <fullName evidence="1">UDP-3-O-[R-3-hydroxymyristoyl]-N-acetylglucosamine deacetylase</fullName>
    </alternativeName>
</protein>
<proteinExistence type="inferred from homology"/>
<dbReference type="EC" id="3.5.1.108" evidence="1"/>
<dbReference type="EMBL" id="AE009442">
    <property type="protein sequence ID" value="AAO29692.1"/>
    <property type="molecule type" value="Genomic_DNA"/>
</dbReference>
<dbReference type="RefSeq" id="WP_004090515.1">
    <property type="nucleotide sequence ID" value="NC_004556.1"/>
</dbReference>
<dbReference type="SMR" id="Q87AG5"/>
<dbReference type="GeneID" id="93905719"/>
<dbReference type="KEGG" id="xft:PD_1860"/>
<dbReference type="HOGENOM" id="CLU_046528_1_0_6"/>
<dbReference type="UniPathway" id="UPA00359">
    <property type="reaction ID" value="UER00478"/>
</dbReference>
<dbReference type="Proteomes" id="UP000002516">
    <property type="component" value="Chromosome"/>
</dbReference>
<dbReference type="GO" id="GO:0016020">
    <property type="term" value="C:membrane"/>
    <property type="evidence" value="ECO:0007669"/>
    <property type="project" value="GOC"/>
</dbReference>
<dbReference type="GO" id="GO:0046872">
    <property type="term" value="F:metal ion binding"/>
    <property type="evidence" value="ECO:0007669"/>
    <property type="project" value="UniProtKB-KW"/>
</dbReference>
<dbReference type="GO" id="GO:0103117">
    <property type="term" value="F:UDP-3-O-acyl-N-acetylglucosamine deacetylase activity"/>
    <property type="evidence" value="ECO:0007669"/>
    <property type="project" value="UniProtKB-UniRule"/>
</dbReference>
<dbReference type="GO" id="GO:0009245">
    <property type="term" value="P:lipid A biosynthetic process"/>
    <property type="evidence" value="ECO:0007669"/>
    <property type="project" value="UniProtKB-UniRule"/>
</dbReference>
<dbReference type="Gene3D" id="3.30.230.20">
    <property type="entry name" value="lpxc deacetylase, domain 1"/>
    <property type="match status" value="1"/>
</dbReference>
<dbReference type="Gene3D" id="3.30.1700.10">
    <property type="entry name" value="lpxc deacetylase, domain 2"/>
    <property type="match status" value="1"/>
</dbReference>
<dbReference type="HAMAP" id="MF_00388">
    <property type="entry name" value="LpxC"/>
    <property type="match status" value="1"/>
</dbReference>
<dbReference type="InterPro" id="IPR020568">
    <property type="entry name" value="Ribosomal_Su5_D2-typ_SF"/>
</dbReference>
<dbReference type="InterPro" id="IPR004463">
    <property type="entry name" value="UDP-acyl_GlcNac_deAcase"/>
</dbReference>
<dbReference type="InterPro" id="IPR011334">
    <property type="entry name" value="UDP-acyl_GlcNac_deAcase_C"/>
</dbReference>
<dbReference type="InterPro" id="IPR015870">
    <property type="entry name" value="UDP-acyl_N-AcGlcN_deAcase_N"/>
</dbReference>
<dbReference type="NCBIfam" id="TIGR00325">
    <property type="entry name" value="lpxC"/>
    <property type="match status" value="1"/>
</dbReference>
<dbReference type="PANTHER" id="PTHR33694">
    <property type="entry name" value="UDP-3-O-ACYL-N-ACETYLGLUCOSAMINE DEACETYLASE 1, MITOCHONDRIAL-RELATED"/>
    <property type="match status" value="1"/>
</dbReference>
<dbReference type="PANTHER" id="PTHR33694:SF1">
    <property type="entry name" value="UDP-3-O-ACYL-N-ACETYLGLUCOSAMINE DEACETYLASE 1, MITOCHONDRIAL-RELATED"/>
    <property type="match status" value="1"/>
</dbReference>
<dbReference type="Pfam" id="PF03331">
    <property type="entry name" value="LpxC"/>
    <property type="match status" value="1"/>
</dbReference>
<dbReference type="SUPFAM" id="SSF54211">
    <property type="entry name" value="Ribosomal protein S5 domain 2-like"/>
    <property type="match status" value="2"/>
</dbReference>
<name>LPXC_XYLFT</name>
<keyword id="KW-0378">Hydrolase</keyword>
<keyword id="KW-0441">Lipid A biosynthesis</keyword>
<keyword id="KW-0444">Lipid biosynthesis</keyword>
<keyword id="KW-0443">Lipid metabolism</keyword>
<keyword id="KW-0479">Metal-binding</keyword>
<keyword id="KW-1185">Reference proteome</keyword>
<keyword id="KW-0862">Zinc</keyword>
<gene>
    <name evidence="1" type="primary">lpxC</name>
    <name type="ordered locus">PD_1860</name>
</gene>
<accession>Q87AG5</accession>
<comment type="function">
    <text evidence="1">Catalyzes the hydrolysis of UDP-3-O-myristoyl-N-acetylglucosamine to form UDP-3-O-myristoylglucosamine and acetate, the committed step in lipid A biosynthesis.</text>
</comment>
<comment type="catalytic activity">
    <reaction evidence="1">
        <text>a UDP-3-O-[(3R)-3-hydroxyacyl]-N-acetyl-alpha-D-glucosamine + H2O = a UDP-3-O-[(3R)-3-hydroxyacyl]-alpha-D-glucosamine + acetate</text>
        <dbReference type="Rhea" id="RHEA:67816"/>
        <dbReference type="ChEBI" id="CHEBI:15377"/>
        <dbReference type="ChEBI" id="CHEBI:30089"/>
        <dbReference type="ChEBI" id="CHEBI:137740"/>
        <dbReference type="ChEBI" id="CHEBI:173225"/>
        <dbReference type="EC" id="3.5.1.108"/>
    </reaction>
</comment>
<comment type="cofactor">
    <cofactor evidence="1">
        <name>Zn(2+)</name>
        <dbReference type="ChEBI" id="CHEBI:29105"/>
    </cofactor>
</comment>
<comment type="pathway">
    <text evidence="1">Glycolipid biosynthesis; lipid IV(A) biosynthesis; lipid IV(A) from (3R)-3-hydroxytetradecanoyl-[acyl-carrier-protein] and UDP-N-acetyl-alpha-D-glucosamine: step 2/6.</text>
</comment>
<comment type="similarity">
    <text evidence="1">Belongs to the LpxC family.</text>
</comment>
<reference key="1">
    <citation type="journal article" date="2003" name="J. Bacteriol.">
        <title>Comparative analyses of the complete genome sequences of Pierce's disease and citrus variegated chlorosis strains of Xylella fastidiosa.</title>
        <authorList>
            <person name="Van Sluys M.A."/>
            <person name="de Oliveira M.C."/>
            <person name="Monteiro-Vitorello C.B."/>
            <person name="Miyaki C.Y."/>
            <person name="Furlan L.R."/>
            <person name="Camargo L.E.A."/>
            <person name="da Silva A.C.R."/>
            <person name="Moon D.H."/>
            <person name="Takita M.A."/>
            <person name="Lemos E.G.M."/>
            <person name="Machado M.A."/>
            <person name="Ferro M.I.T."/>
            <person name="da Silva F.R."/>
            <person name="Goldman M.H.S."/>
            <person name="Goldman G.H."/>
            <person name="Lemos M.V.F."/>
            <person name="El-Dorry H."/>
            <person name="Tsai S.M."/>
            <person name="Carrer H."/>
            <person name="Carraro D.M."/>
            <person name="de Oliveira R.C."/>
            <person name="Nunes L.R."/>
            <person name="Siqueira W.J."/>
            <person name="Coutinho L.L."/>
            <person name="Kimura E.T."/>
            <person name="Ferro E.S."/>
            <person name="Harakava R."/>
            <person name="Kuramae E.E."/>
            <person name="Marino C.L."/>
            <person name="Giglioti E."/>
            <person name="Abreu I.L."/>
            <person name="Alves L.M.C."/>
            <person name="do Amaral A.M."/>
            <person name="Baia G.S."/>
            <person name="Blanco S.R."/>
            <person name="Brito M.S."/>
            <person name="Cannavan F.S."/>
            <person name="Celestino A.V."/>
            <person name="da Cunha A.F."/>
            <person name="Fenille R.C."/>
            <person name="Ferro J.A."/>
            <person name="Formighieri E.F."/>
            <person name="Kishi L.T."/>
            <person name="Leoni S.G."/>
            <person name="Oliveira A.R."/>
            <person name="Rosa V.E. Jr."/>
            <person name="Sassaki F.T."/>
            <person name="Sena J.A.D."/>
            <person name="de Souza A.A."/>
            <person name="Truffi D."/>
            <person name="Tsukumo F."/>
            <person name="Yanai G.M."/>
            <person name="Zaros L.G."/>
            <person name="Civerolo E.L."/>
            <person name="Simpson A.J.G."/>
            <person name="Almeida N.F. Jr."/>
            <person name="Setubal J.C."/>
            <person name="Kitajima J.P."/>
        </authorList>
    </citation>
    <scope>NUCLEOTIDE SEQUENCE [LARGE SCALE GENOMIC DNA]</scope>
    <source>
        <strain>Temecula1 / ATCC 700964</strain>
    </source>
</reference>